<dbReference type="EMBL" id="V00833">
    <property type="protein sequence ID" value="CAA24216.2"/>
    <property type="molecule type" value="Genomic_DNA"/>
</dbReference>
<dbReference type="EMBL" id="V00834">
    <property type="protein sequence ID" value="CAA24216.2"/>
    <property type="status" value="JOINED"/>
    <property type="molecule type" value="Genomic_DNA"/>
</dbReference>
<dbReference type="PIR" id="A21938">
    <property type="entry name" value="HLMSEA"/>
</dbReference>
<dbReference type="PIR" id="B91743">
    <property type="entry name" value="HLMSED"/>
</dbReference>
<dbReference type="RefSeq" id="NP_034511.2">
    <property type="nucleotide sequence ID" value="NM_010381.2"/>
</dbReference>
<dbReference type="PDB" id="1FNE">
    <property type="method" value="X-ray"/>
    <property type="resolution" value="1.90 A"/>
    <property type="chains" value="A/C=26-217"/>
</dbReference>
<dbReference type="PDB" id="1FNG">
    <property type="method" value="X-ray"/>
    <property type="resolution" value="1.90 A"/>
    <property type="chains" value="A/C=26-217"/>
</dbReference>
<dbReference type="PDB" id="1I3R">
    <property type="method" value="X-ray"/>
    <property type="resolution" value="2.40 A"/>
    <property type="chains" value="A/C/E/G=26-217"/>
</dbReference>
<dbReference type="PDB" id="1R5V">
    <property type="method" value="X-ray"/>
    <property type="resolution" value="2.50 A"/>
    <property type="chains" value="A/C=28-207"/>
</dbReference>
<dbReference type="PDB" id="1R5W">
    <property type="method" value="X-ray"/>
    <property type="resolution" value="2.90 A"/>
    <property type="chains" value="A/C=28-207"/>
</dbReference>
<dbReference type="PDB" id="3QIB">
    <property type="method" value="X-ray"/>
    <property type="resolution" value="2.70 A"/>
    <property type="chains" value="A=26-216"/>
</dbReference>
<dbReference type="PDB" id="3QIU">
    <property type="method" value="X-ray"/>
    <property type="resolution" value="2.70 A"/>
    <property type="chains" value="A=28-206"/>
</dbReference>
<dbReference type="PDB" id="3QIW">
    <property type="method" value="X-ray"/>
    <property type="resolution" value="3.30 A"/>
    <property type="chains" value="A=26-217"/>
</dbReference>
<dbReference type="PDB" id="4P2O">
    <property type="method" value="X-ray"/>
    <property type="resolution" value="2.60 A"/>
    <property type="chains" value="A=26-216"/>
</dbReference>
<dbReference type="PDB" id="4P2Q">
    <property type="method" value="X-ray"/>
    <property type="resolution" value="3.30 A"/>
    <property type="chains" value="A/F/K/P=26-216"/>
</dbReference>
<dbReference type="PDB" id="4P2R">
    <property type="method" value="X-ray"/>
    <property type="resolution" value="3.30 A"/>
    <property type="chains" value="A/F/K/P=26-216"/>
</dbReference>
<dbReference type="PDB" id="6BGA">
    <property type="method" value="X-ray"/>
    <property type="resolution" value="2.31 A"/>
    <property type="chains" value="A=26-216"/>
</dbReference>
<dbReference type="PDBsum" id="1FNE"/>
<dbReference type="PDBsum" id="1FNG"/>
<dbReference type="PDBsum" id="1I3R"/>
<dbReference type="PDBsum" id="1R5V"/>
<dbReference type="PDBsum" id="1R5W"/>
<dbReference type="PDBsum" id="3QIB"/>
<dbReference type="PDBsum" id="3QIU"/>
<dbReference type="PDBsum" id="3QIW"/>
<dbReference type="PDBsum" id="4P2O"/>
<dbReference type="PDBsum" id="4P2Q"/>
<dbReference type="PDBsum" id="4P2R"/>
<dbReference type="PDBsum" id="6BGA"/>
<dbReference type="SMR" id="P04224"/>
<dbReference type="FunCoup" id="P04224">
    <property type="interactions" value="471"/>
</dbReference>
<dbReference type="IntAct" id="P04224">
    <property type="interactions" value="1"/>
</dbReference>
<dbReference type="jPOST" id="P04224"/>
<dbReference type="GeneID" id="100504404"/>
<dbReference type="KEGG" id="mmu:100504404"/>
<dbReference type="UCSC" id="uc008cck.1">
    <property type="organism name" value="mouse"/>
</dbReference>
<dbReference type="AGR" id="MGI:95900"/>
<dbReference type="CTD" id="100504404"/>
<dbReference type="MGI" id="MGI:95900">
    <property type="gene designation" value="H2-Ea"/>
</dbReference>
<dbReference type="InParanoid" id="P04224"/>
<dbReference type="EvolutionaryTrace" id="P04224"/>
<dbReference type="Proteomes" id="UP000000589">
    <property type="component" value="Unplaced"/>
</dbReference>
<dbReference type="RNAct" id="P04224">
    <property type="molecule type" value="protein"/>
</dbReference>
<dbReference type="GO" id="GO:0009897">
    <property type="term" value="C:external side of plasma membrane"/>
    <property type="evidence" value="ECO:0000314"/>
    <property type="project" value="MGI"/>
</dbReference>
<dbReference type="GO" id="GO:0031902">
    <property type="term" value="C:late endosome membrane"/>
    <property type="evidence" value="ECO:0000318"/>
    <property type="project" value="GO_Central"/>
</dbReference>
<dbReference type="GO" id="GO:0005765">
    <property type="term" value="C:lysosomal membrane"/>
    <property type="evidence" value="ECO:0000318"/>
    <property type="project" value="GO_Central"/>
</dbReference>
<dbReference type="GO" id="GO:0005764">
    <property type="term" value="C:lysosome"/>
    <property type="evidence" value="ECO:0000266"/>
    <property type="project" value="MGI"/>
</dbReference>
<dbReference type="GO" id="GO:0042613">
    <property type="term" value="C:MHC class II protein complex"/>
    <property type="evidence" value="ECO:0000318"/>
    <property type="project" value="GO_Central"/>
</dbReference>
<dbReference type="GO" id="GO:0005886">
    <property type="term" value="C:plasma membrane"/>
    <property type="evidence" value="ECO:0000266"/>
    <property type="project" value="MGI"/>
</dbReference>
<dbReference type="GO" id="GO:0023026">
    <property type="term" value="F:MHC class II protein complex binding"/>
    <property type="evidence" value="ECO:0000318"/>
    <property type="project" value="GO_Central"/>
</dbReference>
<dbReference type="GO" id="GO:0042605">
    <property type="term" value="F:peptide antigen binding"/>
    <property type="evidence" value="ECO:0000318"/>
    <property type="project" value="GO_Central"/>
</dbReference>
<dbReference type="GO" id="GO:0019886">
    <property type="term" value="P:antigen processing and presentation of exogenous peptide antigen via MHC class II"/>
    <property type="evidence" value="ECO:0000314"/>
    <property type="project" value="MGI"/>
</dbReference>
<dbReference type="GO" id="GO:0016064">
    <property type="term" value="P:immunoglobulin mediated immune response"/>
    <property type="evidence" value="ECO:0000314"/>
    <property type="project" value="MGI"/>
</dbReference>
<dbReference type="GO" id="GO:0002503">
    <property type="term" value="P:peptide antigen assembly with MHC class II protein complex"/>
    <property type="evidence" value="ECO:0000318"/>
    <property type="project" value="GO_Central"/>
</dbReference>
<dbReference type="GO" id="GO:0050778">
    <property type="term" value="P:positive regulation of immune response"/>
    <property type="evidence" value="ECO:0000314"/>
    <property type="project" value="MGI"/>
</dbReference>
<dbReference type="GO" id="GO:0050870">
    <property type="term" value="P:positive regulation of T cell activation"/>
    <property type="evidence" value="ECO:0000318"/>
    <property type="project" value="GO_Central"/>
</dbReference>
<dbReference type="CDD" id="cd21005">
    <property type="entry name" value="IgC1_MHC_II_alpha_I-EK"/>
    <property type="match status" value="1"/>
</dbReference>
<dbReference type="FunFam" id="2.60.40.10:FF:000280">
    <property type="entry name" value="HLA class II histocompatibility antigen, DR alpha chain"/>
    <property type="match status" value="1"/>
</dbReference>
<dbReference type="FunFam" id="3.10.320.10:FF:000002">
    <property type="entry name" value="HLA class II histocompatibility antigen, DR alpha chain"/>
    <property type="match status" value="1"/>
</dbReference>
<dbReference type="Gene3D" id="3.10.320.10">
    <property type="entry name" value="Class II Histocompatibility Antigen, M Beta Chain, Chain B, domain 1"/>
    <property type="match status" value="1"/>
</dbReference>
<dbReference type="Gene3D" id="2.60.40.10">
    <property type="entry name" value="Immunoglobulins"/>
    <property type="match status" value="1"/>
</dbReference>
<dbReference type="InterPro" id="IPR007110">
    <property type="entry name" value="Ig-like_dom"/>
</dbReference>
<dbReference type="InterPro" id="IPR036179">
    <property type="entry name" value="Ig-like_dom_sf"/>
</dbReference>
<dbReference type="InterPro" id="IPR013783">
    <property type="entry name" value="Ig-like_fold"/>
</dbReference>
<dbReference type="InterPro" id="IPR003006">
    <property type="entry name" value="Ig/MHC_CS"/>
</dbReference>
<dbReference type="InterPro" id="IPR003597">
    <property type="entry name" value="Ig_C1-set"/>
</dbReference>
<dbReference type="InterPro" id="IPR050160">
    <property type="entry name" value="MHC/Immunoglobulin"/>
</dbReference>
<dbReference type="InterPro" id="IPR011162">
    <property type="entry name" value="MHC_I/II-like_Ag-recog"/>
</dbReference>
<dbReference type="InterPro" id="IPR014745">
    <property type="entry name" value="MHC_II_a/b_N"/>
</dbReference>
<dbReference type="InterPro" id="IPR001003">
    <property type="entry name" value="MHC_II_a_N"/>
</dbReference>
<dbReference type="PANTHER" id="PTHR19944:SF86">
    <property type="entry name" value="HLA CLASS II HISTOCOMPATIBILITY ANTIGEN, DR ALPHA CHAIN"/>
    <property type="match status" value="1"/>
</dbReference>
<dbReference type="PANTHER" id="PTHR19944">
    <property type="entry name" value="MHC CLASS II-RELATED"/>
    <property type="match status" value="1"/>
</dbReference>
<dbReference type="Pfam" id="PF07654">
    <property type="entry name" value="C1-set"/>
    <property type="match status" value="1"/>
</dbReference>
<dbReference type="Pfam" id="PF00993">
    <property type="entry name" value="MHC_II_alpha"/>
    <property type="match status" value="1"/>
</dbReference>
<dbReference type="SMART" id="SM00407">
    <property type="entry name" value="IGc1"/>
    <property type="match status" value="1"/>
</dbReference>
<dbReference type="SMART" id="SM00920">
    <property type="entry name" value="MHC_II_alpha"/>
    <property type="match status" value="1"/>
</dbReference>
<dbReference type="SUPFAM" id="SSF48726">
    <property type="entry name" value="Immunoglobulin"/>
    <property type="match status" value="1"/>
</dbReference>
<dbReference type="SUPFAM" id="SSF54452">
    <property type="entry name" value="MHC antigen-recognition domain"/>
    <property type="match status" value="1"/>
</dbReference>
<dbReference type="PROSITE" id="PS50835">
    <property type="entry name" value="IG_LIKE"/>
    <property type="match status" value="1"/>
</dbReference>
<dbReference type="PROSITE" id="PS00290">
    <property type="entry name" value="IG_MHC"/>
    <property type="match status" value="1"/>
</dbReference>
<keyword id="KW-0002">3D-structure</keyword>
<keyword id="KW-1064">Adaptive immunity</keyword>
<keyword id="KW-1015">Disulfide bond</keyword>
<keyword id="KW-0325">Glycoprotein</keyword>
<keyword id="KW-0391">Immunity</keyword>
<keyword id="KW-0472">Membrane</keyword>
<keyword id="KW-0491">MHC II</keyword>
<keyword id="KW-1185">Reference proteome</keyword>
<keyword id="KW-0732">Signal</keyword>
<keyword id="KW-0812">Transmembrane</keyword>
<keyword id="KW-1133">Transmembrane helix</keyword>
<evidence type="ECO:0000255" key="1"/>
<evidence type="ECO:0000255" key="2">
    <source>
        <dbReference type="PROSITE-ProRule" id="PRU00114"/>
    </source>
</evidence>
<evidence type="ECO:0000305" key="3"/>
<evidence type="ECO:0007829" key="4">
    <source>
        <dbReference type="PDB" id="1FNE"/>
    </source>
</evidence>
<evidence type="ECO:0007829" key="5">
    <source>
        <dbReference type="PDB" id="3QIB"/>
    </source>
</evidence>
<reference key="1">
    <citation type="journal article" date="1983" name="Proc. Natl. Acad. Sci. U.S.A.">
        <title>The murine Ia alpha chains, E alpha and A alpha, show a surprising degree of sequence homology.</title>
        <authorList>
            <person name="Benoist C.O."/>
            <person name="Mathis D.J."/>
            <person name="Kanter M.R."/>
            <person name="Williams V.E."/>
            <person name="McDevitt H.O."/>
        </authorList>
    </citation>
    <scope>NUCLEOTIDE SEQUENCE [GENOMIC DNA]</scope>
</reference>
<reference key="2">
    <citation type="journal article" date="1983" name="Cell">
        <title>The murine E alpha immune response gene.</title>
        <authorList>
            <person name="Mathis D.J."/>
            <person name="Benoist C.O."/>
            <person name="Williams V.E. II"/>
            <person name="Kanter M.R."/>
            <person name="McDevitt H.O."/>
        </authorList>
    </citation>
    <scope>NUCLEOTIDE SEQUENCE [GENOMIC DNA]</scope>
    <source>
        <strain>A/J</strain>
    </source>
</reference>
<accession>P04224</accession>
<protein>
    <recommendedName>
        <fullName evidence="3">H-2 class II histocompatibility antigen, E-K alpha chain</fullName>
    </recommendedName>
</protein>
<organism>
    <name type="scientific">Mus musculus</name>
    <name type="common">Mouse</name>
    <dbReference type="NCBI Taxonomy" id="10090"/>
    <lineage>
        <taxon>Eukaryota</taxon>
        <taxon>Metazoa</taxon>
        <taxon>Chordata</taxon>
        <taxon>Craniata</taxon>
        <taxon>Vertebrata</taxon>
        <taxon>Euteleostomi</taxon>
        <taxon>Mammalia</taxon>
        <taxon>Eutheria</taxon>
        <taxon>Euarchontoglires</taxon>
        <taxon>Glires</taxon>
        <taxon>Rodentia</taxon>
        <taxon>Myomorpha</taxon>
        <taxon>Muroidea</taxon>
        <taxon>Muridae</taxon>
        <taxon>Murinae</taxon>
        <taxon>Mus</taxon>
        <taxon>Mus</taxon>
    </lineage>
</organism>
<proteinExistence type="evidence at protein level"/>
<name>HA22_MOUSE</name>
<sequence length="255" mass="29121">MATIGALVLRFFFIAVLMSSQKSWAIKEEHTIIQAEFYLLPDKRGEFMFDFDGDEIFHVDIEKSETIWRLEEFAKFASFEAQGALANIAVDKANLDVMKERSNNTPDANVAPEVTVLSRSPVNLGEPNILICFIDKFSPPVVNVTWLRNGRPVTEGVSETVFLPRDDHLFRKFHYLTFLPSTDDFYDCEVDHWGLEEPLRKHWEFEEKTLLPETKENVVCALGLFVGLVGIVVGIILIMKGIKKRNVVERRQGAL</sequence>
<feature type="signal peptide">
    <location>
        <begin position="1"/>
        <end position="25"/>
    </location>
</feature>
<feature type="chain" id="PRO_0000018979" description="H-2 class II histocompatibility antigen, E-K alpha chain">
    <location>
        <begin position="26"/>
        <end position="255"/>
    </location>
</feature>
<feature type="topological domain" description="Extracellular" evidence="1">
    <location>
        <begin position="26"/>
        <end position="216"/>
    </location>
</feature>
<feature type="transmembrane region" description="Helical" evidence="1">
    <location>
        <begin position="217"/>
        <end position="242"/>
    </location>
</feature>
<feature type="topological domain" description="Cytoplasmic" evidence="1">
    <location>
        <begin position="243"/>
        <end position="255"/>
    </location>
</feature>
<feature type="domain" description="Ig-like C1-type">
    <location>
        <begin position="112"/>
        <end position="204"/>
    </location>
</feature>
<feature type="region of interest" description="Alpha-1">
    <location>
        <begin position="26"/>
        <end position="109"/>
    </location>
</feature>
<feature type="region of interest" description="Alpha-2">
    <location>
        <begin position="110"/>
        <end position="203"/>
    </location>
</feature>
<feature type="region of interest" description="Connecting peptide">
    <location>
        <begin position="204"/>
        <end position="216"/>
    </location>
</feature>
<feature type="glycosylation site" description="N-linked (GlcNAc...) asparagine" evidence="1">
    <location>
        <position position="143"/>
    </location>
</feature>
<feature type="disulfide bond" evidence="2">
    <location>
        <begin position="132"/>
        <end position="188"/>
    </location>
</feature>
<feature type="strand" evidence="4">
    <location>
        <begin position="30"/>
        <end position="40"/>
    </location>
</feature>
<feature type="turn" evidence="4">
    <location>
        <begin position="41"/>
        <end position="43"/>
    </location>
</feature>
<feature type="strand" evidence="4">
    <location>
        <begin position="44"/>
        <end position="51"/>
    </location>
</feature>
<feature type="strand" evidence="4">
    <location>
        <begin position="54"/>
        <end position="60"/>
    </location>
</feature>
<feature type="turn" evidence="4">
    <location>
        <begin position="61"/>
        <end position="64"/>
    </location>
</feature>
<feature type="strand" evidence="4">
    <location>
        <begin position="65"/>
        <end position="70"/>
    </location>
</feature>
<feature type="helix" evidence="4">
    <location>
        <begin position="71"/>
        <end position="75"/>
    </location>
</feature>
<feature type="helix" evidence="4">
    <location>
        <begin position="81"/>
        <end position="101"/>
    </location>
</feature>
<feature type="turn" evidence="4">
    <location>
        <begin position="102"/>
        <end position="104"/>
    </location>
</feature>
<feature type="strand" evidence="4">
    <location>
        <begin position="113"/>
        <end position="120"/>
    </location>
</feature>
<feature type="strand" evidence="4">
    <location>
        <begin position="128"/>
        <end position="140"/>
    </location>
</feature>
<feature type="strand" evidence="4">
    <location>
        <begin position="143"/>
        <end position="148"/>
    </location>
</feature>
<feature type="strand" evidence="4">
    <location>
        <begin position="151"/>
        <end position="153"/>
    </location>
</feature>
<feature type="strand" evidence="4">
    <location>
        <begin position="155"/>
        <end position="159"/>
    </location>
</feature>
<feature type="strand" evidence="4">
    <location>
        <begin position="166"/>
        <end position="168"/>
    </location>
</feature>
<feature type="strand" evidence="4">
    <location>
        <begin position="170"/>
        <end position="178"/>
    </location>
</feature>
<feature type="strand" evidence="4">
    <location>
        <begin position="186"/>
        <end position="191"/>
    </location>
</feature>
<feature type="strand" evidence="5">
    <location>
        <begin position="193"/>
        <end position="197"/>
    </location>
</feature>
<feature type="strand" evidence="4">
    <location>
        <begin position="199"/>
        <end position="203"/>
    </location>
</feature>
<comment type="subcellular location">
    <subcellularLocation>
        <location evidence="3">Membrane</location>
        <topology evidence="3">Single-pass type I membrane protein</topology>
    </subcellularLocation>
</comment>
<comment type="similarity">
    <text evidence="3">Belongs to the MHC class II family.</text>
</comment>